<name>NHP6_MYCMD</name>
<feature type="chain" id="PRO_0000245223" description="Non-histone chromosomal protein 6">
    <location>
        <begin position="1"/>
        <end position="99"/>
    </location>
</feature>
<feature type="DNA-binding region" description="HMG box" evidence="2">
    <location>
        <begin position="28"/>
        <end position="96"/>
    </location>
</feature>
<feature type="region of interest" description="Disordered" evidence="3">
    <location>
        <begin position="1"/>
        <end position="32"/>
    </location>
</feature>
<feature type="region of interest" description="Disordered" evidence="3">
    <location>
        <begin position="71"/>
        <end position="99"/>
    </location>
</feature>
<evidence type="ECO:0000250" key="1"/>
<evidence type="ECO:0000255" key="2">
    <source>
        <dbReference type="PROSITE-ProRule" id="PRU00267"/>
    </source>
</evidence>
<evidence type="ECO:0000256" key="3">
    <source>
        <dbReference type="SAM" id="MobiDB-lite"/>
    </source>
</evidence>
<evidence type="ECO:0000305" key="4"/>
<keyword id="KW-0158">Chromosome</keyword>
<keyword id="KW-0227">DNA damage</keyword>
<keyword id="KW-0234">DNA repair</keyword>
<keyword id="KW-0238">DNA-binding</keyword>
<keyword id="KW-0539">Nucleus</keyword>
<keyword id="KW-1185">Reference proteome</keyword>
<keyword id="KW-0804">Transcription</keyword>
<keyword id="KW-0805">Transcription regulation</keyword>
<organism>
    <name type="scientific">Mycosarcoma maydis</name>
    <name type="common">Corn smut fungus</name>
    <name type="synonym">Ustilago maydis</name>
    <dbReference type="NCBI Taxonomy" id="5270"/>
    <lineage>
        <taxon>Eukaryota</taxon>
        <taxon>Fungi</taxon>
        <taxon>Dikarya</taxon>
        <taxon>Basidiomycota</taxon>
        <taxon>Ustilaginomycotina</taxon>
        <taxon>Ustilaginomycetes</taxon>
        <taxon>Ustilaginales</taxon>
        <taxon>Ustilaginaceae</taxon>
        <taxon>Mycosarcoma</taxon>
    </lineage>
</organism>
<sequence>MAKADTKTKSSTSTQKRTTKAKKDPDAPKRPLSAYMFFSQDQRERVKNANPEAGFGEVGRLLGAKWKEMSEAEKKPYNDMANRDKARAEAEKAAYNKRR</sequence>
<accession>Q4PBZ9</accession>
<accession>A0A0D1CTL6</accession>
<gene>
    <name type="primary">NHP6</name>
    <name type="ORF">UMAG_10132</name>
</gene>
<protein>
    <recommendedName>
        <fullName>Non-histone chromosomal protein 6</fullName>
    </recommendedName>
</protein>
<comment type="function">
    <text evidence="1">DNA-binding protein that induces severe bending of DNA. Required for DNA-binding by the FACT complex, a general chromatin factor that acts to reorganize nucleosomes. The FACT complex is involved in multiple processes that require DNA as a template such as mRNA elongation, DNA replication and DNA repair. Also augments the fidelity of transcription by RNA polymerase III independently of any role in the FACT complex (By similarity).</text>
</comment>
<comment type="subunit">
    <text evidence="1">Weakly associates with the stable SPT16-POB3 heterodimer to form the FACT complex.</text>
</comment>
<comment type="subcellular location">
    <subcellularLocation>
        <location evidence="2">Nucleus</location>
    </subcellularLocation>
    <subcellularLocation>
        <location evidence="1">Chromosome</location>
    </subcellularLocation>
</comment>
<comment type="similarity">
    <text evidence="4">Belongs to the NHP6 family.</text>
</comment>
<reference key="1">
    <citation type="journal article" date="2006" name="Nature">
        <title>Insights from the genome of the biotrophic fungal plant pathogen Ustilago maydis.</title>
        <authorList>
            <person name="Kaemper J."/>
            <person name="Kahmann R."/>
            <person name="Boelker M."/>
            <person name="Ma L.-J."/>
            <person name="Brefort T."/>
            <person name="Saville B.J."/>
            <person name="Banuett F."/>
            <person name="Kronstad J.W."/>
            <person name="Gold S.E."/>
            <person name="Mueller O."/>
            <person name="Perlin M.H."/>
            <person name="Woesten H.A.B."/>
            <person name="de Vries R."/>
            <person name="Ruiz-Herrera J."/>
            <person name="Reynaga-Pena C.G."/>
            <person name="Snetselaar K."/>
            <person name="McCann M."/>
            <person name="Perez-Martin J."/>
            <person name="Feldbruegge M."/>
            <person name="Basse C.W."/>
            <person name="Steinberg G."/>
            <person name="Ibeas J.I."/>
            <person name="Holloman W."/>
            <person name="Guzman P."/>
            <person name="Farman M.L."/>
            <person name="Stajich J.E."/>
            <person name="Sentandreu R."/>
            <person name="Gonzalez-Prieto J.M."/>
            <person name="Kennell J.C."/>
            <person name="Molina L."/>
            <person name="Schirawski J."/>
            <person name="Mendoza-Mendoza A."/>
            <person name="Greilinger D."/>
            <person name="Muench K."/>
            <person name="Roessel N."/>
            <person name="Scherer M."/>
            <person name="Vranes M."/>
            <person name="Ladendorf O."/>
            <person name="Vincon V."/>
            <person name="Fuchs U."/>
            <person name="Sandrock B."/>
            <person name="Meng S."/>
            <person name="Ho E.C.H."/>
            <person name="Cahill M.J."/>
            <person name="Boyce K.J."/>
            <person name="Klose J."/>
            <person name="Klosterman S.J."/>
            <person name="Deelstra H.J."/>
            <person name="Ortiz-Castellanos L."/>
            <person name="Li W."/>
            <person name="Sanchez-Alonso P."/>
            <person name="Schreier P.H."/>
            <person name="Haeuser-Hahn I."/>
            <person name="Vaupel M."/>
            <person name="Koopmann E."/>
            <person name="Friedrich G."/>
            <person name="Voss H."/>
            <person name="Schlueter T."/>
            <person name="Margolis J."/>
            <person name="Platt D."/>
            <person name="Swimmer C."/>
            <person name="Gnirke A."/>
            <person name="Chen F."/>
            <person name="Vysotskaia V."/>
            <person name="Mannhaupt G."/>
            <person name="Gueldener U."/>
            <person name="Muensterkoetter M."/>
            <person name="Haase D."/>
            <person name="Oesterheld M."/>
            <person name="Mewes H.-W."/>
            <person name="Mauceli E.W."/>
            <person name="DeCaprio D."/>
            <person name="Wade C.M."/>
            <person name="Butler J."/>
            <person name="Young S.K."/>
            <person name="Jaffe D.B."/>
            <person name="Calvo S.E."/>
            <person name="Nusbaum C."/>
            <person name="Galagan J.E."/>
            <person name="Birren B.W."/>
        </authorList>
    </citation>
    <scope>NUCLEOTIDE SEQUENCE [LARGE SCALE GENOMIC DNA]</scope>
    <source>
        <strain>DSM 14603 / FGSC 9021 / UM521</strain>
    </source>
</reference>
<reference key="2">
    <citation type="submission" date="2014-09" db="EMBL/GenBank/DDBJ databases">
        <authorList>
            <person name="Gueldener U."/>
            <person name="Muensterkoetter M."/>
            <person name="Walter M.C."/>
            <person name="Mannhaupt G."/>
            <person name="Kahmann R."/>
        </authorList>
    </citation>
    <scope>GENOME REANNOTATION</scope>
    <source>
        <strain>DSM 14603 / FGSC 9021 / UM521</strain>
    </source>
</reference>
<proteinExistence type="inferred from homology"/>
<dbReference type="EMBL" id="CM003144">
    <property type="protein sequence ID" value="KIS69843.1"/>
    <property type="molecule type" value="Genomic_DNA"/>
</dbReference>
<dbReference type="RefSeq" id="XP_011388816.1">
    <property type="nucleotide sequence ID" value="XM_011390514.1"/>
</dbReference>
<dbReference type="SMR" id="Q4PBZ9"/>
<dbReference type="FunCoup" id="Q4PBZ9">
    <property type="interactions" value="251"/>
</dbReference>
<dbReference type="STRING" id="237631.Q4PBZ9"/>
<dbReference type="EnsemblFungi" id="KIS69843">
    <property type="protein sequence ID" value="KIS69843"/>
    <property type="gene ID" value="UMAG_10132"/>
</dbReference>
<dbReference type="GeneID" id="23566200"/>
<dbReference type="KEGG" id="uma:UMAG_10132"/>
<dbReference type="VEuPathDB" id="FungiDB:UMAG_10132"/>
<dbReference type="eggNOG" id="KOG0381">
    <property type="taxonomic scope" value="Eukaryota"/>
</dbReference>
<dbReference type="InParanoid" id="Q4PBZ9"/>
<dbReference type="OrthoDB" id="1919336at2759"/>
<dbReference type="Proteomes" id="UP000000561">
    <property type="component" value="Chromosome 5"/>
</dbReference>
<dbReference type="GO" id="GO:0005694">
    <property type="term" value="C:chromosome"/>
    <property type="evidence" value="ECO:0007669"/>
    <property type="project" value="UniProtKB-SubCell"/>
</dbReference>
<dbReference type="GO" id="GO:0005634">
    <property type="term" value="C:nucleus"/>
    <property type="evidence" value="ECO:0007669"/>
    <property type="project" value="UniProtKB-SubCell"/>
</dbReference>
<dbReference type="GO" id="GO:0003677">
    <property type="term" value="F:DNA binding"/>
    <property type="evidence" value="ECO:0007669"/>
    <property type="project" value="UniProtKB-KW"/>
</dbReference>
<dbReference type="GO" id="GO:0006281">
    <property type="term" value="P:DNA repair"/>
    <property type="evidence" value="ECO:0007669"/>
    <property type="project" value="UniProtKB-KW"/>
</dbReference>
<dbReference type="CDD" id="cd01390">
    <property type="entry name" value="HMG-box_NHP6-like"/>
    <property type="match status" value="1"/>
</dbReference>
<dbReference type="FunFam" id="1.10.30.10:FF:000016">
    <property type="entry name" value="FACT complex subunit SSRP1"/>
    <property type="match status" value="1"/>
</dbReference>
<dbReference type="Gene3D" id="1.10.30.10">
    <property type="entry name" value="High mobility group box domain"/>
    <property type="match status" value="1"/>
</dbReference>
<dbReference type="InterPro" id="IPR009071">
    <property type="entry name" value="HMG_box_dom"/>
</dbReference>
<dbReference type="InterPro" id="IPR036910">
    <property type="entry name" value="HMG_box_dom_sf"/>
</dbReference>
<dbReference type="InterPro" id="IPR050342">
    <property type="entry name" value="HMGB"/>
</dbReference>
<dbReference type="PANTHER" id="PTHR48112">
    <property type="entry name" value="HIGH MOBILITY GROUP PROTEIN DSP1"/>
    <property type="match status" value="1"/>
</dbReference>
<dbReference type="PANTHER" id="PTHR48112:SF22">
    <property type="entry name" value="MITOCHONDRIAL TRANSCRIPTION FACTOR A, ISOFORM B"/>
    <property type="match status" value="1"/>
</dbReference>
<dbReference type="Pfam" id="PF00505">
    <property type="entry name" value="HMG_box"/>
    <property type="match status" value="1"/>
</dbReference>
<dbReference type="PRINTS" id="PR00886">
    <property type="entry name" value="HIGHMOBLTY12"/>
</dbReference>
<dbReference type="SMART" id="SM00398">
    <property type="entry name" value="HMG"/>
    <property type="match status" value="1"/>
</dbReference>
<dbReference type="SUPFAM" id="SSF47095">
    <property type="entry name" value="HMG-box"/>
    <property type="match status" value="1"/>
</dbReference>
<dbReference type="PROSITE" id="PS50118">
    <property type="entry name" value="HMG_BOX_2"/>
    <property type="match status" value="1"/>
</dbReference>